<protein>
    <recommendedName>
        <fullName evidence="1">Probable cell division protein WhiA</fullName>
    </recommendedName>
</protein>
<evidence type="ECO:0000255" key="1">
    <source>
        <dbReference type="HAMAP-Rule" id="MF_01420"/>
    </source>
</evidence>
<keyword id="KW-0131">Cell cycle</keyword>
<keyword id="KW-0132">Cell division</keyword>
<keyword id="KW-0238">DNA-binding</keyword>
<gene>
    <name evidence="1" type="primary">whiA</name>
    <name type="ordered locus">SaurJH1_0808</name>
</gene>
<comment type="function">
    <text evidence="1">Involved in cell division and chromosome segregation.</text>
</comment>
<comment type="similarity">
    <text evidence="1">Belongs to the WhiA family.</text>
</comment>
<proteinExistence type="inferred from homology"/>
<name>WHIA_STAA2</name>
<organism>
    <name type="scientific">Staphylococcus aureus (strain JH1)</name>
    <dbReference type="NCBI Taxonomy" id="359787"/>
    <lineage>
        <taxon>Bacteria</taxon>
        <taxon>Bacillati</taxon>
        <taxon>Bacillota</taxon>
        <taxon>Bacilli</taxon>
        <taxon>Bacillales</taxon>
        <taxon>Staphylococcaceae</taxon>
        <taxon>Staphylococcus</taxon>
    </lineage>
</organism>
<reference key="1">
    <citation type="submission" date="2007-06" db="EMBL/GenBank/DDBJ databases">
        <title>Complete sequence of chromosome of Staphylococcus aureus subsp. aureus JH1.</title>
        <authorList>
            <consortium name="US DOE Joint Genome Institute"/>
            <person name="Copeland A."/>
            <person name="Lucas S."/>
            <person name="Lapidus A."/>
            <person name="Barry K."/>
            <person name="Detter J.C."/>
            <person name="Glavina del Rio T."/>
            <person name="Hammon N."/>
            <person name="Israni S."/>
            <person name="Dalin E."/>
            <person name="Tice H."/>
            <person name="Pitluck S."/>
            <person name="Chain P."/>
            <person name="Malfatti S."/>
            <person name="Shin M."/>
            <person name="Vergez L."/>
            <person name="Schmutz J."/>
            <person name="Larimer F."/>
            <person name="Land M."/>
            <person name="Hauser L."/>
            <person name="Kyrpides N."/>
            <person name="Ivanova N."/>
            <person name="Tomasz A."/>
            <person name="Richardson P."/>
        </authorList>
    </citation>
    <scope>NUCLEOTIDE SEQUENCE [LARGE SCALE GENOMIC DNA]</scope>
    <source>
        <strain>JH1</strain>
    </source>
</reference>
<dbReference type="EMBL" id="CP000736">
    <property type="protein sequence ID" value="ABR51664.1"/>
    <property type="molecule type" value="Genomic_DNA"/>
</dbReference>
<dbReference type="SMR" id="A6TZP6"/>
<dbReference type="KEGG" id="sah:SaurJH1_0808"/>
<dbReference type="HOGENOM" id="CLU_053282_0_0_9"/>
<dbReference type="GO" id="GO:0003677">
    <property type="term" value="F:DNA binding"/>
    <property type="evidence" value="ECO:0007669"/>
    <property type="project" value="UniProtKB-UniRule"/>
</dbReference>
<dbReference type="GO" id="GO:0051301">
    <property type="term" value="P:cell division"/>
    <property type="evidence" value="ECO:0007669"/>
    <property type="project" value="UniProtKB-UniRule"/>
</dbReference>
<dbReference type="GO" id="GO:0043937">
    <property type="term" value="P:regulation of sporulation"/>
    <property type="evidence" value="ECO:0007669"/>
    <property type="project" value="InterPro"/>
</dbReference>
<dbReference type="FunFam" id="3.10.28.10:FF:000002">
    <property type="entry name" value="Probable cell division protein WhiA"/>
    <property type="match status" value="1"/>
</dbReference>
<dbReference type="Gene3D" id="3.10.28.10">
    <property type="entry name" value="Homing endonucleases"/>
    <property type="match status" value="1"/>
</dbReference>
<dbReference type="HAMAP" id="MF_01420">
    <property type="entry name" value="HTH_type_WhiA"/>
    <property type="match status" value="1"/>
</dbReference>
<dbReference type="InterPro" id="IPR027434">
    <property type="entry name" value="Homing_endonucl"/>
</dbReference>
<dbReference type="InterPro" id="IPR018478">
    <property type="entry name" value="Sporu_reg_WhiA_N_dom"/>
</dbReference>
<dbReference type="InterPro" id="IPR003802">
    <property type="entry name" value="Sporulation_regulator_WhiA"/>
</dbReference>
<dbReference type="InterPro" id="IPR023054">
    <property type="entry name" value="Sporulation_regulator_WhiA_C"/>
</dbReference>
<dbReference type="InterPro" id="IPR039518">
    <property type="entry name" value="WhiA_LAGLIDADG_dom"/>
</dbReference>
<dbReference type="NCBIfam" id="TIGR00647">
    <property type="entry name" value="DNA_bind_WhiA"/>
    <property type="match status" value="1"/>
</dbReference>
<dbReference type="PANTHER" id="PTHR37307">
    <property type="entry name" value="CELL DIVISION PROTEIN WHIA-RELATED"/>
    <property type="match status" value="1"/>
</dbReference>
<dbReference type="PANTHER" id="PTHR37307:SF1">
    <property type="entry name" value="CELL DIVISION PROTEIN WHIA-RELATED"/>
    <property type="match status" value="1"/>
</dbReference>
<dbReference type="Pfam" id="PF02650">
    <property type="entry name" value="HTH_WhiA"/>
    <property type="match status" value="1"/>
</dbReference>
<dbReference type="Pfam" id="PF14527">
    <property type="entry name" value="LAGLIDADG_WhiA"/>
    <property type="match status" value="1"/>
</dbReference>
<dbReference type="Pfam" id="PF10298">
    <property type="entry name" value="WhiA_N"/>
    <property type="match status" value="1"/>
</dbReference>
<dbReference type="SUPFAM" id="SSF55608">
    <property type="entry name" value="Homing endonucleases"/>
    <property type="match status" value="1"/>
</dbReference>
<sequence>MSFASEMKNELTRIDVDEMNAKAELSALIRMNGALSLSNQQFVINVQTENATTARRIYSLIKRVFNVEVEILVRKKMKLKKNNIYICRTKMKAKEILDELGILKDGIFTHEIDHSMIQDDEMRRSYLRGAFLAGGSVNNPETSSYHLEIFSQNESHAEGLTKLMNSYELNAKHLERKKGSITYLKEAEKISDFLSLIGGYQALLKFEDVRIVRDMRNSVNRLVNCETANLNKTVSAAMKQVESIKLIDKEIGIENLPDRLREIARIRVEHQEISLKELGEMVSTGPISKSGVNHRLRKLNDLADKIRNGEQIEL</sequence>
<accession>A6TZP6</accession>
<feature type="chain" id="PRO_0000376553" description="Probable cell division protein WhiA">
    <location>
        <begin position="1"/>
        <end position="314"/>
    </location>
</feature>
<feature type="DNA-binding region" description="H-T-H motif" evidence="1">
    <location>
        <begin position="274"/>
        <end position="308"/>
    </location>
</feature>